<proteinExistence type="inferred from homology"/>
<comment type="function">
    <text evidence="1">Endogalactanase involved in the degradation of plant cell wall polysaccharides, and more particularly of hairy regions of pectin.</text>
</comment>
<comment type="catalytic activity">
    <reaction>
        <text>The enzyme specifically hydrolyzes (1-&gt;4)-beta-D-galactosidic linkages in type I arabinogalactans.</text>
        <dbReference type="EC" id="3.2.1.89"/>
    </reaction>
</comment>
<comment type="subcellular location">
    <subcellularLocation>
        <location evidence="1">Secreted</location>
    </subcellularLocation>
</comment>
<comment type="similarity">
    <text evidence="3">Belongs to the glycosyl hydrolase 53 family.</text>
</comment>
<gene>
    <name type="primary">galA</name>
    <name type="ORF">AFLA_127930</name>
</gene>
<keyword id="KW-0119">Carbohydrate metabolism</keyword>
<keyword id="KW-0961">Cell wall biogenesis/degradation</keyword>
<keyword id="KW-0326">Glycosidase</keyword>
<keyword id="KW-0378">Hydrolase</keyword>
<keyword id="KW-0624">Polysaccharide degradation</keyword>
<keyword id="KW-0964">Secreted</keyword>
<keyword id="KW-0732">Signal</keyword>
<reference key="1">
    <citation type="journal article" date="2015" name="Genome Announc.">
        <title>Genome sequence of Aspergillus flavus NRRL 3357, a strain that causes aflatoxin contamination of food and feed.</title>
        <authorList>
            <person name="Nierman W.C."/>
            <person name="Yu J."/>
            <person name="Fedorova-Abrams N.D."/>
            <person name="Losada L."/>
            <person name="Cleveland T.E."/>
            <person name="Bhatnagar D."/>
            <person name="Bennett J.W."/>
            <person name="Dean R."/>
            <person name="Payne G.A."/>
        </authorList>
    </citation>
    <scope>NUCLEOTIDE SEQUENCE [LARGE SCALE GENOMIC DNA]</scope>
    <source>
        <strain>ATCC 200026 / FGSC A1120 / IAM 13836 / NRRL 3357 / JCM 12722 / SRRC 167</strain>
    </source>
</reference>
<evidence type="ECO:0000250" key="1"/>
<evidence type="ECO:0000255" key="2"/>
<evidence type="ECO:0000305" key="3"/>
<feature type="signal peptide" evidence="2">
    <location>
        <begin position="1"/>
        <end position="16"/>
    </location>
</feature>
<feature type="chain" id="PRO_0000394945" description="Probable arabinogalactan endo-beta-1,4-galactanase A">
    <location>
        <begin position="17"/>
        <end position="347"/>
    </location>
</feature>
<feature type="active site" description="Proton donor" evidence="1">
    <location>
        <position position="150"/>
    </location>
</feature>
<feature type="active site" description="Nucleophile" evidence="1">
    <location>
        <position position="260"/>
    </location>
</feature>
<protein>
    <recommendedName>
        <fullName>Probable arabinogalactan endo-beta-1,4-galactanase A</fullName>
        <ecNumber>3.2.1.89</ecNumber>
    </recommendedName>
    <alternativeName>
        <fullName>Endo-1,4-beta-galactanase A</fullName>
        <shortName>Galactanase A</shortName>
    </alternativeName>
</protein>
<name>GANA_ASPFN</name>
<accession>B8NNI2</accession>
<sequence>MLFSYLLATLPLLANAALTYKGADISSVFIEEKAGVAYKNLAGETQALEAILTDNGVNSIRQRVWVKNGDYDLTYNVNLAKRVAATGASIYLDLHYSDDWADPKHQTTPDGWSTDDINTLADQIYQYTLSVCNTFAEEKINVEIVSIGNEITSGLLWPLGKTPNYENIARLLHSGAWGVKDSKLATKPKILIHLDNGWDWDQQKYFYDTALGTGLLTSDDFDMIGVSYYPFYNEKATLASLKTSLTNIQTTYGKEVAVVETNWPVKCSSPEFAFPADLKDIPFSVDGQVTFLQRLADTLTATKASGFFYWEPAWTKNAGLGSSCEDNLLVDYNTNQVRSSVKAFGQV</sequence>
<organism>
    <name type="scientific">Aspergillus flavus (strain ATCC 200026 / FGSC A1120 / IAM 13836 / NRRL 3357 / JCM 12722 / SRRC 167)</name>
    <dbReference type="NCBI Taxonomy" id="332952"/>
    <lineage>
        <taxon>Eukaryota</taxon>
        <taxon>Fungi</taxon>
        <taxon>Dikarya</taxon>
        <taxon>Ascomycota</taxon>
        <taxon>Pezizomycotina</taxon>
        <taxon>Eurotiomycetes</taxon>
        <taxon>Eurotiomycetidae</taxon>
        <taxon>Eurotiales</taxon>
        <taxon>Aspergillaceae</taxon>
        <taxon>Aspergillus</taxon>
        <taxon>Aspergillus subgen. Circumdati</taxon>
    </lineage>
</organism>
<dbReference type="EC" id="3.2.1.89"/>
<dbReference type="EMBL" id="EQ963481">
    <property type="protein sequence ID" value="EED48570.1"/>
    <property type="molecule type" value="Genomic_DNA"/>
</dbReference>
<dbReference type="RefSeq" id="XP_002381986.1">
    <property type="nucleotide sequence ID" value="XM_002381945.1"/>
</dbReference>
<dbReference type="SMR" id="B8NNI2"/>
<dbReference type="STRING" id="332952.B8NNI2"/>
<dbReference type="EnsemblFungi" id="EED48570">
    <property type="protein sequence ID" value="EED48570"/>
    <property type="gene ID" value="AFLA_127930"/>
</dbReference>
<dbReference type="VEuPathDB" id="FungiDB:AFLA_012608"/>
<dbReference type="eggNOG" id="ENOG502QU6R">
    <property type="taxonomic scope" value="Eukaryota"/>
</dbReference>
<dbReference type="HOGENOM" id="CLU_011259_0_0_1"/>
<dbReference type="OMA" id="KYIHDEW"/>
<dbReference type="GO" id="GO:0005576">
    <property type="term" value="C:extracellular region"/>
    <property type="evidence" value="ECO:0000250"/>
    <property type="project" value="UniProtKB"/>
</dbReference>
<dbReference type="GO" id="GO:0031218">
    <property type="term" value="F:arabinogalactan endo-1,4-beta-galactosidase activity"/>
    <property type="evidence" value="ECO:0000250"/>
    <property type="project" value="UniProtKB"/>
</dbReference>
<dbReference type="GO" id="GO:0015926">
    <property type="term" value="F:glucosidase activity"/>
    <property type="evidence" value="ECO:0007669"/>
    <property type="project" value="InterPro"/>
</dbReference>
<dbReference type="GO" id="GO:0071555">
    <property type="term" value="P:cell wall organization"/>
    <property type="evidence" value="ECO:0007669"/>
    <property type="project" value="UniProtKB-KW"/>
</dbReference>
<dbReference type="GO" id="GO:0045490">
    <property type="term" value="P:pectin catabolic process"/>
    <property type="evidence" value="ECO:0000250"/>
    <property type="project" value="UniProtKB"/>
</dbReference>
<dbReference type="FunFam" id="3.20.20.80:FF:000077">
    <property type="entry name" value="Arabinogalactan endo-beta-1,4-galactanase"/>
    <property type="match status" value="1"/>
</dbReference>
<dbReference type="Gene3D" id="3.20.20.80">
    <property type="entry name" value="Glycosidases"/>
    <property type="match status" value="1"/>
</dbReference>
<dbReference type="InterPro" id="IPR011683">
    <property type="entry name" value="Glyco_hydro_53"/>
</dbReference>
<dbReference type="InterPro" id="IPR017853">
    <property type="entry name" value="Glycoside_hydrolase_SF"/>
</dbReference>
<dbReference type="PANTHER" id="PTHR34983">
    <property type="entry name" value="ARABINOGALACTAN ENDO-BETA-1,4-GALACTANASE A"/>
    <property type="match status" value="1"/>
</dbReference>
<dbReference type="PANTHER" id="PTHR34983:SF1">
    <property type="entry name" value="ARABINOGALACTAN ENDO-BETA-1,4-GALACTANASE A"/>
    <property type="match status" value="1"/>
</dbReference>
<dbReference type="Pfam" id="PF07745">
    <property type="entry name" value="Glyco_hydro_53"/>
    <property type="match status" value="1"/>
</dbReference>
<dbReference type="SUPFAM" id="SSF51445">
    <property type="entry name" value="(Trans)glycosidases"/>
    <property type="match status" value="1"/>
</dbReference>